<organism>
    <name type="scientific">Bacillus subtilis (strain 168)</name>
    <dbReference type="NCBI Taxonomy" id="224308"/>
    <lineage>
        <taxon>Bacteria</taxon>
        <taxon>Bacillati</taxon>
        <taxon>Bacillota</taxon>
        <taxon>Bacilli</taxon>
        <taxon>Bacillales</taxon>
        <taxon>Bacillaceae</taxon>
        <taxon>Bacillus</taxon>
    </lineage>
</organism>
<feature type="chain" id="PRO_0000198090" description="Ribosomal RNA large subunit methyltransferase H">
    <location>
        <begin position="1"/>
        <end position="159"/>
    </location>
</feature>
<feature type="binding site" evidence="1">
    <location>
        <position position="76"/>
    </location>
    <ligand>
        <name>S-adenosyl-L-methionine</name>
        <dbReference type="ChEBI" id="CHEBI:59789"/>
    </ligand>
</feature>
<feature type="binding site" evidence="1">
    <location>
        <position position="108"/>
    </location>
    <ligand>
        <name>S-adenosyl-L-methionine</name>
        <dbReference type="ChEBI" id="CHEBI:59789"/>
    </ligand>
</feature>
<feature type="binding site" evidence="1">
    <location>
        <begin position="127"/>
        <end position="132"/>
    </location>
    <ligand>
        <name>S-adenosyl-L-methionine</name>
        <dbReference type="ChEBI" id="CHEBI:59789"/>
    </ligand>
</feature>
<feature type="strand" evidence="2">
    <location>
        <begin position="2"/>
        <end position="9"/>
    </location>
</feature>
<feature type="helix" evidence="2">
    <location>
        <begin position="14"/>
        <end position="27"/>
    </location>
</feature>
<feature type="turn" evidence="2">
    <location>
        <begin position="28"/>
        <end position="30"/>
    </location>
</feature>
<feature type="strand" evidence="2">
    <location>
        <begin position="31"/>
        <end position="38"/>
    </location>
</feature>
<feature type="helix" evidence="2">
    <location>
        <begin position="54"/>
        <end position="64"/>
    </location>
</feature>
<feature type="strand" evidence="2">
    <location>
        <begin position="71"/>
        <end position="76"/>
    </location>
</feature>
<feature type="strand" evidence="2">
    <location>
        <begin position="80"/>
        <end position="82"/>
    </location>
</feature>
<feature type="helix" evidence="2">
    <location>
        <begin position="85"/>
        <end position="96"/>
    </location>
</feature>
<feature type="turn" evidence="2">
    <location>
        <begin position="97"/>
        <end position="99"/>
    </location>
</feature>
<feature type="strand" evidence="2">
    <location>
        <begin position="102"/>
        <end position="107"/>
    </location>
</feature>
<feature type="helix" evidence="2">
    <location>
        <begin position="115"/>
        <end position="120"/>
    </location>
</feature>
<feature type="strand" evidence="2">
    <location>
        <begin position="122"/>
        <end position="127"/>
    </location>
</feature>
<feature type="helix" evidence="2">
    <location>
        <begin position="134"/>
        <end position="152"/>
    </location>
</feature>
<evidence type="ECO:0000255" key="1">
    <source>
        <dbReference type="HAMAP-Rule" id="MF_00658"/>
    </source>
</evidence>
<evidence type="ECO:0007829" key="2">
    <source>
        <dbReference type="PDB" id="1TO0"/>
    </source>
</evidence>
<sequence length="159" mass="18073">MNINIVTIGKLKEKYLKQGIEEYTKRLSAYAKIDIIELPDEKAPENLSDQDMKIIKDKEGDRILSKISPDAHVIALAIEGKMKTSEELADTIDKLATYGKSKVTFVIGGSLGLSDTVMKRADEKLSFSKMTFPHQLMRLILVEQIYRAFRINRGEPYHK</sequence>
<keyword id="KW-0002">3D-structure</keyword>
<keyword id="KW-0963">Cytoplasm</keyword>
<keyword id="KW-0489">Methyltransferase</keyword>
<keyword id="KW-1185">Reference proteome</keyword>
<keyword id="KW-0698">rRNA processing</keyword>
<keyword id="KW-0949">S-adenosyl-L-methionine</keyword>
<keyword id="KW-0808">Transferase</keyword>
<comment type="function">
    <text evidence="1">Specifically methylates the pseudouridine at position 1915 (m3Psi1915) in 23S rRNA.</text>
</comment>
<comment type="catalytic activity">
    <reaction evidence="1">
        <text>pseudouridine(1915) in 23S rRNA + S-adenosyl-L-methionine = N(3)-methylpseudouridine(1915) in 23S rRNA + S-adenosyl-L-homocysteine + H(+)</text>
        <dbReference type="Rhea" id="RHEA:42752"/>
        <dbReference type="Rhea" id="RHEA-COMP:10221"/>
        <dbReference type="Rhea" id="RHEA-COMP:10222"/>
        <dbReference type="ChEBI" id="CHEBI:15378"/>
        <dbReference type="ChEBI" id="CHEBI:57856"/>
        <dbReference type="ChEBI" id="CHEBI:59789"/>
        <dbReference type="ChEBI" id="CHEBI:65314"/>
        <dbReference type="ChEBI" id="CHEBI:74486"/>
        <dbReference type="EC" id="2.1.1.177"/>
    </reaction>
</comment>
<comment type="subunit">
    <text evidence="1">Homodimer.</text>
</comment>
<comment type="subcellular location">
    <subcellularLocation>
        <location evidence="1">Cytoplasm</location>
    </subcellularLocation>
</comment>
<comment type="similarity">
    <text evidence="1">Belongs to the RNA methyltransferase RlmH family.</text>
</comment>
<name>RLMH_BACSU</name>
<reference key="1">
    <citation type="journal article" date="1997" name="DNA Res.">
        <title>Sequence analysis of the 36-kb region between gntZ and trnY genes of Bacillus subtilis genome.</title>
        <authorList>
            <person name="Kasahara Y."/>
            <person name="Nakai S."/>
            <person name="Ogasawara N."/>
        </authorList>
    </citation>
    <scope>NUCLEOTIDE SEQUENCE [GENOMIC DNA]</scope>
    <source>
        <strain>168</strain>
    </source>
</reference>
<reference key="2">
    <citation type="journal article" date="1997" name="Nature">
        <title>The complete genome sequence of the Gram-positive bacterium Bacillus subtilis.</title>
        <authorList>
            <person name="Kunst F."/>
            <person name="Ogasawara N."/>
            <person name="Moszer I."/>
            <person name="Albertini A.M."/>
            <person name="Alloni G."/>
            <person name="Azevedo V."/>
            <person name="Bertero M.G."/>
            <person name="Bessieres P."/>
            <person name="Bolotin A."/>
            <person name="Borchert S."/>
            <person name="Borriss R."/>
            <person name="Boursier L."/>
            <person name="Brans A."/>
            <person name="Braun M."/>
            <person name="Brignell S.C."/>
            <person name="Bron S."/>
            <person name="Brouillet S."/>
            <person name="Bruschi C.V."/>
            <person name="Caldwell B."/>
            <person name="Capuano V."/>
            <person name="Carter N.M."/>
            <person name="Choi S.-K."/>
            <person name="Codani J.-J."/>
            <person name="Connerton I.F."/>
            <person name="Cummings N.J."/>
            <person name="Daniel R.A."/>
            <person name="Denizot F."/>
            <person name="Devine K.M."/>
            <person name="Duesterhoeft A."/>
            <person name="Ehrlich S.D."/>
            <person name="Emmerson P.T."/>
            <person name="Entian K.-D."/>
            <person name="Errington J."/>
            <person name="Fabret C."/>
            <person name="Ferrari E."/>
            <person name="Foulger D."/>
            <person name="Fritz C."/>
            <person name="Fujita M."/>
            <person name="Fujita Y."/>
            <person name="Fuma S."/>
            <person name="Galizzi A."/>
            <person name="Galleron N."/>
            <person name="Ghim S.-Y."/>
            <person name="Glaser P."/>
            <person name="Goffeau A."/>
            <person name="Golightly E.J."/>
            <person name="Grandi G."/>
            <person name="Guiseppi G."/>
            <person name="Guy B.J."/>
            <person name="Haga K."/>
            <person name="Haiech J."/>
            <person name="Harwood C.R."/>
            <person name="Henaut A."/>
            <person name="Hilbert H."/>
            <person name="Holsappel S."/>
            <person name="Hosono S."/>
            <person name="Hullo M.-F."/>
            <person name="Itaya M."/>
            <person name="Jones L.-M."/>
            <person name="Joris B."/>
            <person name="Karamata D."/>
            <person name="Kasahara Y."/>
            <person name="Klaerr-Blanchard M."/>
            <person name="Klein C."/>
            <person name="Kobayashi Y."/>
            <person name="Koetter P."/>
            <person name="Koningstein G."/>
            <person name="Krogh S."/>
            <person name="Kumano M."/>
            <person name="Kurita K."/>
            <person name="Lapidus A."/>
            <person name="Lardinois S."/>
            <person name="Lauber J."/>
            <person name="Lazarevic V."/>
            <person name="Lee S.-M."/>
            <person name="Levine A."/>
            <person name="Liu H."/>
            <person name="Masuda S."/>
            <person name="Mauel C."/>
            <person name="Medigue C."/>
            <person name="Medina N."/>
            <person name="Mellado R.P."/>
            <person name="Mizuno M."/>
            <person name="Moestl D."/>
            <person name="Nakai S."/>
            <person name="Noback M."/>
            <person name="Noone D."/>
            <person name="O'Reilly M."/>
            <person name="Ogawa K."/>
            <person name="Ogiwara A."/>
            <person name="Oudega B."/>
            <person name="Park S.-H."/>
            <person name="Parro V."/>
            <person name="Pohl T.M."/>
            <person name="Portetelle D."/>
            <person name="Porwollik S."/>
            <person name="Prescott A.M."/>
            <person name="Presecan E."/>
            <person name="Pujic P."/>
            <person name="Purnelle B."/>
            <person name="Rapoport G."/>
            <person name="Rey M."/>
            <person name="Reynolds S."/>
            <person name="Rieger M."/>
            <person name="Rivolta C."/>
            <person name="Rocha E."/>
            <person name="Roche B."/>
            <person name="Rose M."/>
            <person name="Sadaie Y."/>
            <person name="Sato T."/>
            <person name="Scanlan E."/>
            <person name="Schleich S."/>
            <person name="Schroeter R."/>
            <person name="Scoffone F."/>
            <person name="Sekiguchi J."/>
            <person name="Sekowska A."/>
            <person name="Seror S.J."/>
            <person name="Serror P."/>
            <person name="Shin B.-S."/>
            <person name="Soldo B."/>
            <person name="Sorokin A."/>
            <person name="Tacconi E."/>
            <person name="Takagi T."/>
            <person name="Takahashi H."/>
            <person name="Takemaru K."/>
            <person name="Takeuchi M."/>
            <person name="Tamakoshi A."/>
            <person name="Tanaka T."/>
            <person name="Terpstra P."/>
            <person name="Tognoni A."/>
            <person name="Tosato V."/>
            <person name="Uchiyama S."/>
            <person name="Vandenbol M."/>
            <person name="Vannier F."/>
            <person name="Vassarotti A."/>
            <person name="Viari A."/>
            <person name="Wambutt R."/>
            <person name="Wedler E."/>
            <person name="Wedler H."/>
            <person name="Weitzenegger T."/>
            <person name="Winters P."/>
            <person name="Wipat A."/>
            <person name="Yamamoto H."/>
            <person name="Yamane K."/>
            <person name="Yasumoto K."/>
            <person name="Yata K."/>
            <person name="Yoshida K."/>
            <person name="Yoshikawa H.-F."/>
            <person name="Zumstein E."/>
            <person name="Yoshikawa H."/>
            <person name="Danchin A."/>
        </authorList>
    </citation>
    <scope>NUCLEOTIDE SEQUENCE [LARGE SCALE GENOMIC DNA]</scope>
    <source>
        <strain>168</strain>
    </source>
</reference>
<reference key="3">
    <citation type="journal article" date="2006" name="BMC Bioinformatics">
        <title>PDB-UF: database of predicted enzymatic functions for unannotated protein structures from structural genomics.</title>
        <authorList>
            <person name="von Grotthuss M."/>
            <person name="Plewczynski D."/>
            <person name="Ginalski K."/>
            <person name="Rychlewski L."/>
            <person name="Shakhnovich E.I."/>
        </authorList>
    </citation>
    <scope>X-RAY CRYSTALLOGRAPHY (2.5 ANGSTROMS)</scope>
</reference>
<proteinExistence type="evidence at protein level"/>
<accession>Q45601</accession>
<protein>
    <recommendedName>
        <fullName evidence="1">Ribosomal RNA large subunit methyltransferase H</fullName>
        <ecNumber evidence="1">2.1.1.177</ecNumber>
    </recommendedName>
    <alternativeName>
        <fullName evidence="1">23S rRNA (pseudouridine1915-N3)-methyltransferase</fullName>
    </alternativeName>
    <alternativeName>
        <fullName evidence="1">23S rRNA m3Psi1915 methyltransferase</fullName>
    </alternativeName>
    <alternativeName>
        <fullName evidence="1">rRNA (pseudouridine-N3-)-methyltransferase RlmH</fullName>
    </alternativeName>
</protein>
<gene>
    <name evidence="1" type="primary">rlmH</name>
    <name type="synonym">yydA</name>
    <name type="ordered locus">BSU40230</name>
</gene>
<dbReference type="EC" id="2.1.1.177" evidence="1"/>
<dbReference type="EMBL" id="D78193">
    <property type="protein sequence ID" value="BAA11281.1"/>
    <property type="molecule type" value="Genomic_DNA"/>
</dbReference>
<dbReference type="EMBL" id="AL009126">
    <property type="protein sequence ID" value="CAB16060.1"/>
    <property type="molecule type" value="Genomic_DNA"/>
</dbReference>
<dbReference type="PIR" id="H70090">
    <property type="entry name" value="H70090"/>
</dbReference>
<dbReference type="RefSeq" id="NP_391903.1">
    <property type="nucleotide sequence ID" value="NC_000964.3"/>
</dbReference>
<dbReference type="RefSeq" id="WP_003243164.1">
    <property type="nucleotide sequence ID" value="NZ_OZ025638.1"/>
</dbReference>
<dbReference type="PDB" id="1TO0">
    <property type="method" value="X-ray"/>
    <property type="resolution" value="2.50 A"/>
    <property type="chains" value="A/B/C/D/E/F/G/H=1-159"/>
</dbReference>
<dbReference type="PDBsum" id="1TO0"/>
<dbReference type="SMR" id="Q45601"/>
<dbReference type="FunCoup" id="Q45601">
    <property type="interactions" value="218"/>
</dbReference>
<dbReference type="STRING" id="224308.BSU40230"/>
<dbReference type="PaxDb" id="224308-BSU40230"/>
<dbReference type="EnsemblBacteria" id="CAB16060">
    <property type="protein sequence ID" value="CAB16060"/>
    <property type="gene ID" value="BSU_40230"/>
</dbReference>
<dbReference type="GeneID" id="937752"/>
<dbReference type="KEGG" id="bsu:BSU40230"/>
<dbReference type="PATRIC" id="fig|224308.179.peg.4351"/>
<dbReference type="eggNOG" id="COG1576">
    <property type="taxonomic scope" value="Bacteria"/>
</dbReference>
<dbReference type="InParanoid" id="Q45601"/>
<dbReference type="OrthoDB" id="9806643at2"/>
<dbReference type="PhylomeDB" id="Q45601"/>
<dbReference type="BioCyc" id="BSUB:BSU40230-MONOMER"/>
<dbReference type="EvolutionaryTrace" id="Q45601"/>
<dbReference type="Proteomes" id="UP000001570">
    <property type="component" value="Chromosome"/>
</dbReference>
<dbReference type="GO" id="GO:0005737">
    <property type="term" value="C:cytoplasm"/>
    <property type="evidence" value="ECO:0007669"/>
    <property type="project" value="UniProtKB-SubCell"/>
</dbReference>
<dbReference type="GO" id="GO:0070038">
    <property type="term" value="F:rRNA (pseudouridine-N3-)-methyltransferase activity"/>
    <property type="evidence" value="ECO:0007669"/>
    <property type="project" value="UniProtKB-UniRule"/>
</dbReference>
<dbReference type="CDD" id="cd18081">
    <property type="entry name" value="RlmH-like"/>
    <property type="match status" value="1"/>
</dbReference>
<dbReference type="Gene3D" id="3.40.1280.10">
    <property type="match status" value="1"/>
</dbReference>
<dbReference type="HAMAP" id="MF_00658">
    <property type="entry name" value="23SrRNA_methyltr_H"/>
    <property type="match status" value="1"/>
</dbReference>
<dbReference type="InterPro" id="IPR029028">
    <property type="entry name" value="Alpha/beta_knot_MTases"/>
</dbReference>
<dbReference type="InterPro" id="IPR003742">
    <property type="entry name" value="RlmH-like"/>
</dbReference>
<dbReference type="InterPro" id="IPR029026">
    <property type="entry name" value="tRNA_m1G_MTases_N"/>
</dbReference>
<dbReference type="NCBIfam" id="NF000985">
    <property type="entry name" value="PRK00103.1-3"/>
    <property type="match status" value="1"/>
</dbReference>
<dbReference type="NCBIfam" id="TIGR00246">
    <property type="entry name" value="tRNA_RlmH_YbeA"/>
    <property type="match status" value="1"/>
</dbReference>
<dbReference type="PANTHER" id="PTHR33603">
    <property type="entry name" value="METHYLTRANSFERASE"/>
    <property type="match status" value="1"/>
</dbReference>
<dbReference type="PANTHER" id="PTHR33603:SF1">
    <property type="entry name" value="RIBOSOMAL RNA LARGE SUBUNIT METHYLTRANSFERASE H"/>
    <property type="match status" value="1"/>
</dbReference>
<dbReference type="Pfam" id="PF02590">
    <property type="entry name" value="SPOUT_MTase"/>
    <property type="match status" value="1"/>
</dbReference>
<dbReference type="PIRSF" id="PIRSF004505">
    <property type="entry name" value="MT_bac"/>
    <property type="match status" value="1"/>
</dbReference>
<dbReference type="SUPFAM" id="SSF75217">
    <property type="entry name" value="alpha/beta knot"/>
    <property type="match status" value="1"/>
</dbReference>